<feature type="signal peptide" evidence="3">
    <location>
        <begin position="1"/>
        <end position="16"/>
    </location>
</feature>
<feature type="chain" id="PRO_0000394627" description="Probable arabinan endo-1,5-alpha-L-arabinosidase B">
    <location>
        <begin position="17"/>
        <end position="372"/>
    </location>
</feature>
<feature type="region of interest" description="Disordered" evidence="4">
    <location>
        <begin position="23"/>
        <end position="52"/>
    </location>
</feature>
<feature type="compositionally biased region" description="Low complexity" evidence="4">
    <location>
        <begin position="23"/>
        <end position="34"/>
    </location>
</feature>
<feature type="active site" description="Proton acceptor" evidence="2">
    <location>
        <position position="59"/>
    </location>
</feature>
<feature type="active site" description="Proton donor" evidence="2">
    <location>
        <position position="252"/>
    </location>
</feature>
<feature type="site" description="Important for catalytic activity, responsible for pKa modulation of the active site Glu and correct orientation of both the proton donor and substrate" evidence="2">
    <location>
        <position position="179"/>
    </location>
</feature>
<feature type="glycosylation site" description="N-linked (GlcNAc...) asparagine" evidence="3">
    <location>
        <position position="120"/>
    </location>
</feature>
<feature type="glycosylation site" description="N-linked (GlcNAc...) asparagine" evidence="3">
    <location>
        <position position="363"/>
    </location>
</feature>
<comment type="function">
    <text evidence="1">Endo-1,5-alpha-L-arabinanase involved in degradation of pectin. Its preferred substrate is linear 1,5-alpha-L-arabinan (By similarity).</text>
</comment>
<comment type="catalytic activity">
    <reaction>
        <text>Endohydrolysis of (1-&gt;5)-alpha-arabinofuranosidic linkages in (1-&gt;5)-arabinans.</text>
        <dbReference type="EC" id="3.2.1.99"/>
    </reaction>
</comment>
<comment type="pathway">
    <text>Glycan metabolism; L-arabinan degradation.</text>
</comment>
<comment type="subcellular location">
    <subcellularLocation>
        <location evidence="1">Secreted</location>
    </subcellularLocation>
</comment>
<comment type="similarity">
    <text evidence="5">Belongs to the glycosyl hydrolase 43 family.</text>
</comment>
<comment type="sequence caution" evidence="5">
    <conflict type="erroneous initiation">
        <sequence resource="EMBL-CDS" id="EAL93710"/>
    </conflict>
    <text>Extended N-terminus.</text>
</comment>
<name>ABNB_ASPFU</name>
<organism>
    <name type="scientific">Aspergillus fumigatus (strain ATCC MYA-4609 / CBS 101355 / FGSC A1100 / Af293)</name>
    <name type="common">Neosartorya fumigata</name>
    <dbReference type="NCBI Taxonomy" id="330879"/>
    <lineage>
        <taxon>Eukaryota</taxon>
        <taxon>Fungi</taxon>
        <taxon>Dikarya</taxon>
        <taxon>Ascomycota</taxon>
        <taxon>Pezizomycotina</taxon>
        <taxon>Eurotiomycetes</taxon>
        <taxon>Eurotiomycetidae</taxon>
        <taxon>Eurotiales</taxon>
        <taxon>Aspergillaceae</taxon>
        <taxon>Aspergillus</taxon>
        <taxon>Aspergillus subgen. Fumigati</taxon>
    </lineage>
</organism>
<protein>
    <recommendedName>
        <fullName>Probable arabinan endo-1,5-alpha-L-arabinosidase B</fullName>
        <ecNumber>3.2.1.99</ecNumber>
    </recommendedName>
    <alternativeName>
        <fullName>Endo-1,5-alpha-L-arabinanase B</fullName>
        <shortName>ABN B</shortName>
    </alternativeName>
</protein>
<reference key="1">
    <citation type="journal article" date="2005" name="Nature">
        <title>Genomic sequence of the pathogenic and allergenic filamentous fungus Aspergillus fumigatus.</title>
        <authorList>
            <person name="Nierman W.C."/>
            <person name="Pain A."/>
            <person name="Anderson M.J."/>
            <person name="Wortman J.R."/>
            <person name="Kim H.S."/>
            <person name="Arroyo J."/>
            <person name="Berriman M."/>
            <person name="Abe K."/>
            <person name="Archer D.B."/>
            <person name="Bermejo C."/>
            <person name="Bennett J.W."/>
            <person name="Bowyer P."/>
            <person name="Chen D."/>
            <person name="Collins M."/>
            <person name="Coulsen R."/>
            <person name="Davies R."/>
            <person name="Dyer P.S."/>
            <person name="Farman M.L."/>
            <person name="Fedorova N."/>
            <person name="Fedorova N.D."/>
            <person name="Feldblyum T.V."/>
            <person name="Fischer R."/>
            <person name="Fosker N."/>
            <person name="Fraser A."/>
            <person name="Garcia J.L."/>
            <person name="Garcia M.J."/>
            <person name="Goble A."/>
            <person name="Goldman G.H."/>
            <person name="Gomi K."/>
            <person name="Griffith-Jones S."/>
            <person name="Gwilliam R."/>
            <person name="Haas B.J."/>
            <person name="Haas H."/>
            <person name="Harris D.E."/>
            <person name="Horiuchi H."/>
            <person name="Huang J."/>
            <person name="Humphray S."/>
            <person name="Jimenez J."/>
            <person name="Keller N."/>
            <person name="Khouri H."/>
            <person name="Kitamoto K."/>
            <person name="Kobayashi T."/>
            <person name="Konzack S."/>
            <person name="Kulkarni R."/>
            <person name="Kumagai T."/>
            <person name="Lafton A."/>
            <person name="Latge J.-P."/>
            <person name="Li W."/>
            <person name="Lord A."/>
            <person name="Lu C."/>
            <person name="Majoros W.H."/>
            <person name="May G.S."/>
            <person name="Miller B.L."/>
            <person name="Mohamoud Y."/>
            <person name="Molina M."/>
            <person name="Monod M."/>
            <person name="Mouyna I."/>
            <person name="Mulligan S."/>
            <person name="Murphy L.D."/>
            <person name="O'Neil S."/>
            <person name="Paulsen I."/>
            <person name="Penalva M.A."/>
            <person name="Pertea M."/>
            <person name="Price C."/>
            <person name="Pritchard B.L."/>
            <person name="Quail M.A."/>
            <person name="Rabbinowitsch E."/>
            <person name="Rawlins N."/>
            <person name="Rajandream M.A."/>
            <person name="Reichard U."/>
            <person name="Renauld H."/>
            <person name="Robson G.D."/>
            <person name="Rodriguez de Cordoba S."/>
            <person name="Rodriguez-Pena J.M."/>
            <person name="Ronning C.M."/>
            <person name="Rutter S."/>
            <person name="Salzberg S.L."/>
            <person name="Sanchez M."/>
            <person name="Sanchez-Ferrero J.C."/>
            <person name="Saunders D."/>
            <person name="Seeger K."/>
            <person name="Squares R."/>
            <person name="Squares S."/>
            <person name="Takeuchi M."/>
            <person name="Tekaia F."/>
            <person name="Turner G."/>
            <person name="Vazquez de Aldana C.R."/>
            <person name="Weidman J."/>
            <person name="White O."/>
            <person name="Woodward J.R."/>
            <person name="Yu J.-H."/>
            <person name="Fraser C.M."/>
            <person name="Galagan J.E."/>
            <person name="Asai K."/>
            <person name="Machida M."/>
            <person name="Hall N."/>
            <person name="Barrell B.G."/>
            <person name="Denning D.W."/>
        </authorList>
    </citation>
    <scope>NUCLEOTIDE SEQUENCE [LARGE SCALE GENOMIC DNA]</scope>
    <source>
        <strain>ATCC MYA-4609 / CBS 101355 / FGSC A1100 / Af293</strain>
    </source>
</reference>
<accession>Q4X0A5</accession>
<dbReference type="EC" id="3.2.1.99"/>
<dbReference type="EMBL" id="AAHF01000001">
    <property type="protein sequence ID" value="EAL93710.1"/>
    <property type="status" value="ALT_INIT"/>
    <property type="molecule type" value="Genomic_DNA"/>
</dbReference>
<dbReference type="RefSeq" id="XP_755748.1">
    <property type="nucleotide sequence ID" value="XM_750655.1"/>
</dbReference>
<dbReference type="SMR" id="Q4X0A5"/>
<dbReference type="STRING" id="330879.Q4X0A5"/>
<dbReference type="GlyCosmos" id="Q4X0A5">
    <property type="glycosylation" value="2 sites, No reported glycans"/>
</dbReference>
<dbReference type="GeneID" id="3513128"/>
<dbReference type="KEGG" id="afm:AFUA_2G14150"/>
<dbReference type="eggNOG" id="ENOG502S2VU">
    <property type="taxonomic scope" value="Eukaryota"/>
</dbReference>
<dbReference type="HOGENOM" id="CLU_009397_5_0_1"/>
<dbReference type="InParanoid" id="Q4X0A5"/>
<dbReference type="OrthoDB" id="195678at2759"/>
<dbReference type="UniPathway" id="UPA00667"/>
<dbReference type="Proteomes" id="UP000002530">
    <property type="component" value="Chromosome 2"/>
</dbReference>
<dbReference type="GO" id="GO:0005576">
    <property type="term" value="C:extracellular region"/>
    <property type="evidence" value="ECO:0007669"/>
    <property type="project" value="UniProtKB-SubCell"/>
</dbReference>
<dbReference type="GO" id="GO:0046558">
    <property type="term" value="F:arabinan endo-1,5-alpha-L-arabinosidase activity"/>
    <property type="evidence" value="ECO:0007669"/>
    <property type="project" value="UniProtKB-EC"/>
</dbReference>
<dbReference type="GO" id="GO:0031222">
    <property type="term" value="P:arabinan catabolic process"/>
    <property type="evidence" value="ECO:0007669"/>
    <property type="project" value="UniProtKB-UniPathway"/>
</dbReference>
<dbReference type="GO" id="GO:0045493">
    <property type="term" value="P:xylan catabolic process"/>
    <property type="evidence" value="ECO:0007669"/>
    <property type="project" value="UniProtKB-KW"/>
</dbReference>
<dbReference type="CDD" id="cd18831">
    <property type="entry name" value="GH43_AnAbnA-like"/>
    <property type="match status" value="1"/>
</dbReference>
<dbReference type="Gene3D" id="2.115.10.20">
    <property type="entry name" value="Glycosyl hydrolase domain, family 43"/>
    <property type="match status" value="1"/>
</dbReference>
<dbReference type="InterPro" id="IPR050727">
    <property type="entry name" value="GH43_arabinanases"/>
</dbReference>
<dbReference type="InterPro" id="IPR006710">
    <property type="entry name" value="Glyco_hydro_43"/>
</dbReference>
<dbReference type="InterPro" id="IPR016840">
    <property type="entry name" value="Glyco_hydro_43_endo_a_Ara-ase"/>
</dbReference>
<dbReference type="InterPro" id="IPR023296">
    <property type="entry name" value="Glyco_hydro_beta-prop_sf"/>
</dbReference>
<dbReference type="PANTHER" id="PTHR43301">
    <property type="entry name" value="ARABINAN ENDO-1,5-ALPHA-L-ARABINOSIDASE"/>
    <property type="match status" value="1"/>
</dbReference>
<dbReference type="PANTHER" id="PTHR43301:SF4">
    <property type="entry name" value="ARABINAN ENDO-1,5-ALPHA-L-ARABINOSIDASE B"/>
    <property type="match status" value="1"/>
</dbReference>
<dbReference type="Pfam" id="PF04616">
    <property type="entry name" value="Glyco_hydro_43"/>
    <property type="match status" value="1"/>
</dbReference>
<dbReference type="PIRSF" id="PIRSF026534">
    <property type="entry name" value="Endo_alpha-L-arabinosidase"/>
    <property type="match status" value="1"/>
</dbReference>
<dbReference type="SUPFAM" id="SSF75005">
    <property type="entry name" value="Arabinanase/levansucrase/invertase"/>
    <property type="match status" value="1"/>
</dbReference>
<gene>
    <name type="primary">abnB</name>
    <name type="ORF">AFUA_2G14150</name>
</gene>
<sequence>MTVLVALFCLVTWTLCTRIPQYSTQGTQQPQQPEKTPHPHPQPEDAFPPTHATDLKIHDPSIIHVDGTYYSYSVGRHIRIHQAPSLDGPWERTGAVLNADSVIPKGDRKAPWAPQTVHHNDTYYCFYAVSNSGCRDSAIGVATSKSPGPGGWTDHGLLVQSGTGKGSDEHPFTSSNTIDPSVFVGEDGHGYLTFGSFWSGIWQVPLDESLLSVAGDTSSEARQLVYMEKAPLPASKHPNPLCREPSGARPIEGSFLSYHEPWYYLWFSYGKCCKFDTKNLPPPGREYSIRVGRSKSPRGPFVDKQGRDLANGGGEIVYASNRDVYAPGGQGVLTEKSGDILYYHYCRYPVIQEIEVDADLTVNKSTSYDFWV</sequence>
<proteinExistence type="inferred from homology"/>
<keyword id="KW-0119">Carbohydrate metabolism</keyword>
<keyword id="KW-0325">Glycoprotein</keyword>
<keyword id="KW-0326">Glycosidase</keyword>
<keyword id="KW-0378">Hydrolase</keyword>
<keyword id="KW-0624">Polysaccharide degradation</keyword>
<keyword id="KW-1185">Reference proteome</keyword>
<keyword id="KW-0964">Secreted</keyword>
<keyword id="KW-0732">Signal</keyword>
<keyword id="KW-0858">Xylan degradation</keyword>
<evidence type="ECO:0000250" key="1"/>
<evidence type="ECO:0000250" key="2">
    <source>
        <dbReference type="UniProtKB" id="P94522"/>
    </source>
</evidence>
<evidence type="ECO:0000255" key="3"/>
<evidence type="ECO:0000256" key="4">
    <source>
        <dbReference type="SAM" id="MobiDB-lite"/>
    </source>
</evidence>
<evidence type="ECO:0000305" key="5"/>